<dbReference type="EMBL" id="CP000725">
    <property type="protein sequence ID" value="ABV10269.1"/>
    <property type="molecule type" value="Genomic_DNA"/>
</dbReference>
<dbReference type="RefSeq" id="WP_005591431.1">
    <property type="nucleotide sequence ID" value="NC_009785.1"/>
</dbReference>
<dbReference type="SMR" id="A8AUB8"/>
<dbReference type="STRING" id="467705.SGO_0056"/>
<dbReference type="GeneID" id="93788739"/>
<dbReference type="KEGG" id="sgo:SGO_0056"/>
<dbReference type="eggNOG" id="COG0236">
    <property type="taxonomic scope" value="Bacteria"/>
</dbReference>
<dbReference type="HOGENOM" id="CLU_108696_19_0_9"/>
<dbReference type="UniPathway" id="UPA00556"/>
<dbReference type="Proteomes" id="UP000001131">
    <property type="component" value="Chromosome"/>
</dbReference>
<dbReference type="GO" id="GO:0005737">
    <property type="term" value="C:cytoplasm"/>
    <property type="evidence" value="ECO:0007669"/>
    <property type="project" value="UniProtKB-SubCell"/>
</dbReference>
<dbReference type="GO" id="GO:0036370">
    <property type="term" value="F:D-alanyl carrier activity"/>
    <property type="evidence" value="ECO:0007669"/>
    <property type="project" value="UniProtKB-UniRule"/>
</dbReference>
<dbReference type="GO" id="GO:0071555">
    <property type="term" value="P:cell wall organization"/>
    <property type="evidence" value="ECO:0007669"/>
    <property type="project" value="UniProtKB-KW"/>
</dbReference>
<dbReference type="GO" id="GO:0070395">
    <property type="term" value="P:lipoteichoic acid biosynthetic process"/>
    <property type="evidence" value="ECO:0007669"/>
    <property type="project" value="UniProtKB-UniRule"/>
</dbReference>
<dbReference type="Gene3D" id="1.10.1200.10">
    <property type="entry name" value="ACP-like"/>
    <property type="match status" value="1"/>
</dbReference>
<dbReference type="HAMAP" id="MF_00565">
    <property type="entry name" value="DltC"/>
    <property type="match status" value="1"/>
</dbReference>
<dbReference type="InterPro" id="IPR036736">
    <property type="entry name" value="ACP-like_sf"/>
</dbReference>
<dbReference type="InterPro" id="IPR003230">
    <property type="entry name" value="DltC"/>
</dbReference>
<dbReference type="InterPro" id="IPR009081">
    <property type="entry name" value="PP-bd_ACP"/>
</dbReference>
<dbReference type="NCBIfam" id="TIGR01688">
    <property type="entry name" value="dltC"/>
    <property type="match status" value="1"/>
</dbReference>
<dbReference type="NCBIfam" id="NF003464">
    <property type="entry name" value="PRK05087.1"/>
    <property type="match status" value="1"/>
</dbReference>
<dbReference type="Pfam" id="PF00550">
    <property type="entry name" value="PP-binding"/>
    <property type="match status" value="1"/>
</dbReference>
<dbReference type="SUPFAM" id="SSF47336">
    <property type="entry name" value="ACP-like"/>
    <property type="match status" value="1"/>
</dbReference>
<dbReference type="PROSITE" id="PS50075">
    <property type="entry name" value="CARRIER"/>
    <property type="match status" value="1"/>
</dbReference>
<protein>
    <recommendedName>
        <fullName evidence="1">D-alanyl carrier protein</fullName>
        <shortName evidence="1">DCP</shortName>
    </recommendedName>
    <alternativeName>
        <fullName evidence="1">D-alanine--poly(phosphoribitol) ligase subunit 2</fullName>
    </alternativeName>
</protein>
<comment type="function">
    <text evidence="1">Carrier protein involved in the D-alanylation of lipoteichoic acid (LTA). The loading of thioester-linked D-alanine onto DltC is catalyzed by D-alanine--D-alanyl carrier protein ligase DltA. The DltC-carried D-alanyl group is further transferred to cell membrane phosphatidylglycerol (PG) by forming an ester bond, probably catalyzed by DltD. D-alanylation of LTA plays an important role in modulating the properties of the cell wall in Gram-positive bacteria, influencing the net charge of the cell wall.</text>
</comment>
<comment type="pathway">
    <text evidence="1">Cell wall biogenesis; lipoteichoic acid biosynthesis.</text>
</comment>
<comment type="subcellular location">
    <subcellularLocation>
        <location evidence="1">Cytoplasm</location>
    </subcellularLocation>
</comment>
<comment type="PTM">
    <text evidence="1">4'-phosphopantetheine is transferred from CoA to a specific serine of apo-DCP.</text>
</comment>
<comment type="similarity">
    <text evidence="1">Belongs to the DltC family.</text>
</comment>
<evidence type="ECO:0000255" key="1">
    <source>
        <dbReference type="HAMAP-Rule" id="MF_00565"/>
    </source>
</evidence>
<name>DLTC_STRGC</name>
<proteinExistence type="inferred from homology"/>
<keyword id="KW-0961">Cell wall biogenesis/degradation</keyword>
<keyword id="KW-0963">Cytoplasm</keyword>
<keyword id="KW-0596">Phosphopantetheine</keyword>
<keyword id="KW-0597">Phosphoprotein</keyword>
<keyword id="KW-1185">Reference proteome</keyword>
<organism>
    <name type="scientific">Streptococcus gordonii (strain Challis / ATCC 35105 / BCRC 15272 / CH1 / DL1 / V288)</name>
    <dbReference type="NCBI Taxonomy" id="467705"/>
    <lineage>
        <taxon>Bacteria</taxon>
        <taxon>Bacillati</taxon>
        <taxon>Bacillota</taxon>
        <taxon>Bacilli</taxon>
        <taxon>Lactobacillales</taxon>
        <taxon>Streptococcaceae</taxon>
        <taxon>Streptococcus</taxon>
    </lineage>
</organism>
<reference key="1">
    <citation type="journal article" date="2007" name="J. Bacteriol.">
        <title>Genome-wide transcriptional changes in Streptococcus gordonii in response to competence signaling peptide.</title>
        <authorList>
            <person name="Vickerman M.M."/>
            <person name="Iobst S."/>
            <person name="Jesionowski A.M."/>
            <person name="Gill S.R."/>
        </authorList>
    </citation>
    <scope>NUCLEOTIDE SEQUENCE [LARGE SCALE GENOMIC DNA]</scope>
    <source>
        <strain>Challis / ATCC 35105 / BCRC 15272 / CH1 / DL1 / V288</strain>
    </source>
</reference>
<sequence>MDVKAEVIEIIDELFMEDVSDMMDEDLFDAGVLDSMGTVELIVELENRFDIRVPVSEFGRDDWNTANKIVEGVTELRNA</sequence>
<feature type="chain" id="PRO_1000082310" description="D-alanyl carrier protein">
    <location>
        <begin position="1"/>
        <end position="79"/>
    </location>
</feature>
<feature type="domain" description="Carrier" evidence="1">
    <location>
        <begin position="1"/>
        <end position="77"/>
    </location>
</feature>
<feature type="modified residue" description="O-(pantetheine 4'-phosphoryl)serine" evidence="1">
    <location>
        <position position="35"/>
    </location>
</feature>
<gene>
    <name evidence="1" type="primary">dltC</name>
    <name type="ordered locus">SGO_0056</name>
</gene>
<accession>A8AUB8</accession>